<sequence>MKFLDEAKVYIRSGDGGNGCVAFRREKFIEFGGPNGGNGGRGGDVVVEAADGLNTLIDYRYQQHFKAQKGVNGMGSDRHGANGKDIVLKVPVGTQIIDEDKETLLHDFTKVGERFVLAEGGNGGFGNAHFKSSTNRAPRHANPGLPGEERWIWLRLKLIADAGLVGLPNAGKSTFLSKVSAAKPKIADYPFTTLHPQLGVVNSDGREFVLADIPGLIEGAHEGAGLGDRFLGHVERCRVLLHLIDATCEHAGKAYKTVRGELEAYADTLTDKIEIVALNKIDAVEPDELKKQKDRLKRAAKKTPLLISGVTGAGVPEALRALAAVIGEAPVSDKAIGTAQNAADAKPWAPQDV</sequence>
<comment type="function">
    <text evidence="1">An essential GTPase which binds GTP, GDP and possibly (p)ppGpp with moderate affinity, with high nucleotide exchange rates and a fairly low GTP hydrolysis rate. Plays a role in control of the cell cycle, stress response, ribosome biogenesis and in those bacteria that undergo differentiation, in morphogenesis control.</text>
</comment>
<comment type="cofactor">
    <cofactor evidence="1">
        <name>Mg(2+)</name>
        <dbReference type="ChEBI" id="CHEBI:18420"/>
    </cofactor>
</comment>
<comment type="subunit">
    <text evidence="1">Monomer.</text>
</comment>
<comment type="subcellular location">
    <subcellularLocation>
        <location evidence="1">Cytoplasm</location>
    </subcellularLocation>
</comment>
<comment type="similarity">
    <text evidence="1">Belongs to the TRAFAC class OBG-HflX-like GTPase superfamily. OBG GTPase family.</text>
</comment>
<name>OBG_RHOPS</name>
<evidence type="ECO:0000255" key="1">
    <source>
        <dbReference type="HAMAP-Rule" id="MF_01454"/>
    </source>
</evidence>
<evidence type="ECO:0000255" key="2">
    <source>
        <dbReference type="PROSITE-ProRule" id="PRU01231"/>
    </source>
</evidence>
<accession>Q13DL7</accession>
<organism>
    <name type="scientific">Rhodopseudomonas palustris (strain BisB5)</name>
    <dbReference type="NCBI Taxonomy" id="316057"/>
    <lineage>
        <taxon>Bacteria</taxon>
        <taxon>Pseudomonadati</taxon>
        <taxon>Pseudomonadota</taxon>
        <taxon>Alphaproteobacteria</taxon>
        <taxon>Hyphomicrobiales</taxon>
        <taxon>Nitrobacteraceae</taxon>
        <taxon>Rhodopseudomonas</taxon>
    </lineage>
</organism>
<protein>
    <recommendedName>
        <fullName evidence="1">GTPase Obg</fullName>
        <ecNumber evidence="1">3.6.5.-</ecNumber>
    </recommendedName>
    <alternativeName>
        <fullName evidence="1">GTP-binding protein Obg</fullName>
    </alternativeName>
</protein>
<feature type="chain" id="PRO_0000386193" description="GTPase Obg">
    <location>
        <begin position="1"/>
        <end position="353"/>
    </location>
</feature>
<feature type="domain" description="Obg" evidence="2">
    <location>
        <begin position="1"/>
        <end position="159"/>
    </location>
</feature>
<feature type="domain" description="OBG-type G" evidence="1">
    <location>
        <begin position="160"/>
        <end position="327"/>
    </location>
</feature>
<feature type="binding site" evidence="1">
    <location>
        <begin position="166"/>
        <end position="173"/>
    </location>
    <ligand>
        <name>GTP</name>
        <dbReference type="ChEBI" id="CHEBI:37565"/>
    </ligand>
</feature>
<feature type="binding site" evidence="1">
    <location>
        <position position="173"/>
    </location>
    <ligand>
        <name>Mg(2+)</name>
        <dbReference type="ChEBI" id="CHEBI:18420"/>
    </ligand>
</feature>
<feature type="binding site" evidence="1">
    <location>
        <begin position="191"/>
        <end position="195"/>
    </location>
    <ligand>
        <name>GTP</name>
        <dbReference type="ChEBI" id="CHEBI:37565"/>
    </ligand>
</feature>
<feature type="binding site" evidence="1">
    <location>
        <position position="193"/>
    </location>
    <ligand>
        <name>Mg(2+)</name>
        <dbReference type="ChEBI" id="CHEBI:18420"/>
    </ligand>
</feature>
<feature type="binding site" evidence="1">
    <location>
        <begin position="212"/>
        <end position="215"/>
    </location>
    <ligand>
        <name>GTP</name>
        <dbReference type="ChEBI" id="CHEBI:37565"/>
    </ligand>
</feature>
<feature type="binding site" evidence="1">
    <location>
        <begin position="279"/>
        <end position="282"/>
    </location>
    <ligand>
        <name>GTP</name>
        <dbReference type="ChEBI" id="CHEBI:37565"/>
    </ligand>
</feature>
<feature type="binding site" evidence="1">
    <location>
        <begin position="308"/>
        <end position="310"/>
    </location>
    <ligand>
        <name>GTP</name>
        <dbReference type="ChEBI" id="CHEBI:37565"/>
    </ligand>
</feature>
<proteinExistence type="inferred from homology"/>
<reference key="1">
    <citation type="submission" date="2006-03" db="EMBL/GenBank/DDBJ databases">
        <title>Complete sequence of Rhodopseudomonas palustris BisB5.</title>
        <authorList>
            <consortium name="US DOE Joint Genome Institute"/>
            <person name="Copeland A."/>
            <person name="Lucas S."/>
            <person name="Lapidus A."/>
            <person name="Barry K."/>
            <person name="Detter J.C."/>
            <person name="Glavina del Rio T."/>
            <person name="Hammon N."/>
            <person name="Israni S."/>
            <person name="Dalin E."/>
            <person name="Tice H."/>
            <person name="Pitluck S."/>
            <person name="Chain P."/>
            <person name="Malfatti S."/>
            <person name="Shin M."/>
            <person name="Vergez L."/>
            <person name="Schmutz J."/>
            <person name="Larimer F."/>
            <person name="Land M."/>
            <person name="Hauser L."/>
            <person name="Pelletier D.A."/>
            <person name="Kyrpides N."/>
            <person name="Lykidis A."/>
            <person name="Oda Y."/>
            <person name="Harwood C.S."/>
            <person name="Richardson P."/>
        </authorList>
    </citation>
    <scope>NUCLEOTIDE SEQUENCE [LARGE SCALE GENOMIC DNA]</scope>
    <source>
        <strain>BisB5</strain>
    </source>
</reference>
<keyword id="KW-0963">Cytoplasm</keyword>
<keyword id="KW-0342">GTP-binding</keyword>
<keyword id="KW-0378">Hydrolase</keyword>
<keyword id="KW-0460">Magnesium</keyword>
<keyword id="KW-0479">Metal-binding</keyword>
<keyword id="KW-0547">Nucleotide-binding</keyword>
<gene>
    <name evidence="1" type="primary">obg</name>
    <name type="ordered locus">RPD_0584</name>
</gene>
<dbReference type="EC" id="3.6.5.-" evidence="1"/>
<dbReference type="EMBL" id="CP000283">
    <property type="protein sequence ID" value="ABE37822.1"/>
    <property type="molecule type" value="Genomic_DNA"/>
</dbReference>
<dbReference type="SMR" id="Q13DL7"/>
<dbReference type="STRING" id="316057.RPD_0584"/>
<dbReference type="KEGG" id="rpd:RPD_0584"/>
<dbReference type="eggNOG" id="COG0536">
    <property type="taxonomic scope" value="Bacteria"/>
</dbReference>
<dbReference type="HOGENOM" id="CLU_011747_2_0_5"/>
<dbReference type="BioCyc" id="RPAL316057:RPD_RS03000-MONOMER"/>
<dbReference type="Proteomes" id="UP000001818">
    <property type="component" value="Chromosome"/>
</dbReference>
<dbReference type="GO" id="GO:0005737">
    <property type="term" value="C:cytoplasm"/>
    <property type="evidence" value="ECO:0007669"/>
    <property type="project" value="UniProtKB-SubCell"/>
</dbReference>
<dbReference type="GO" id="GO:0005525">
    <property type="term" value="F:GTP binding"/>
    <property type="evidence" value="ECO:0007669"/>
    <property type="project" value="UniProtKB-UniRule"/>
</dbReference>
<dbReference type="GO" id="GO:0003924">
    <property type="term" value="F:GTPase activity"/>
    <property type="evidence" value="ECO:0007669"/>
    <property type="project" value="UniProtKB-UniRule"/>
</dbReference>
<dbReference type="GO" id="GO:0000287">
    <property type="term" value="F:magnesium ion binding"/>
    <property type="evidence" value="ECO:0007669"/>
    <property type="project" value="InterPro"/>
</dbReference>
<dbReference type="GO" id="GO:0042254">
    <property type="term" value="P:ribosome biogenesis"/>
    <property type="evidence" value="ECO:0007669"/>
    <property type="project" value="UniProtKB-UniRule"/>
</dbReference>
<dbReference type="CDD" id="cd01898">
    <property type="entry name" value="Obg"/>
    <property type="match status" value="1"/>
</dbReference>
<dbReference type="FunFam" id="2.70.210.12:FF:000001">
    <property type="entry name" value="GTPase Obg"/>
    <property type="match status" value="1"/>
</dbReference>
<dbReference type="Gene3D" id="2.70.210.12">
    <property type="entry name" value="GTP1/OBG domain"/>
    <property type="match status" value="1"/>
</dbReference>
<dbReference type="Gene3D" id="3.40.50.300">
    <property type="entry name" value="P-loop containing nucleotide triphosphate hydrolases"/>
    <property type="match status" value="1"/>
</dbReference>
<dbReference type="HAMAP" id="MF_01454">
    <property type="entry name" value="GTPase_Obg"/>
    <property type="match status" value="1"/>
</dbReference>
<dbReference type="InterPro" id="IPR031167">
    <property type="entry name" value="G_OBG"/>
</dbReference>
<dbReference type="InterPro" id="IPR006073">
    <property type="entry name" value="GTP-bd"/>
</dbReference>
<dbReference type="InterPro" id="IPR014100">
    <property type="entry name" value="GTP-bd_Obg/CgtA"/>
</dbReference>
<dbReference type="InterPro" id="IPR006074">
    <property type="entry name" value="GTP1-OBG_CS"/>
</dbReference>
<dbReference type="InterPro" id="IPR006169">
    <property type="entry name" value="GTP1_OBG_dom"/>
</dbReference>
<dbReference type="InterPro" id="IPR036726">
    <property type="entry name" value="GTP1_OBG_dom_sf"/>
</dbReference>
<dbReference type="InterPro" id="IPR045086">
    <property type="entry name" value="OBG_GTPase"/>
</dbReference>
<dbReference type="InterPro" id="IPR027417">
    <property type="entry name" value="P-loop_NTPase"/>
</dbReference>
<dbReference type="NCBIfam" id="TIGR02729">
    <property type="entry name" value="Obg_CgtA"/>
    <property type="match status" value="1"/>
</dbReference>
<dbReference type="NCBIfam" id="NF008955">
    <property type="entry name" value="PRK12297.1"/>
    <property type="match status" value="1"/>
</dbReference>
<dbReference type="NCBIfam" id="NF008956">
    <property type="entry name" value="PRK12299.1"/>
    <property type="match status" value="1"/>
</dbReference>
<dbReference type="PANTHER" id="PTHR11702">
    <property type="entry name" value="DEVELOPMENTALLY REGULATED GTP-BINDING PROTEIN-RELATED"/>
    <property type="match status" value="1"/>
</dbReference>
<dbReference type="PANTHER" id="PTHR11702:SF31">
    <property type="entry name" value="MITOCHONDRIAL RIBOSOME-ASSOCIATED GTPASE 2"/>
    <property type="match status" value="1"/>
</dbReference>
<dbReference type="Pfam" id="PF01018">
    <property type="entry name" value="GTP1_OBG"/>
    <property type="match status" value="1"/>
</dbReference>
<dbReference type="Pfam" id="PF01926">
    <property type="entry name" value="MMR_HSR1"/>
    <property type="match status" value="1"/>
</dbReference>
<dbReference type="PIRSF" id="PIRSF002401">
    <property type="entry name" value="GTP_bd_Obg/CgtA"/>
    <property type="match status" value="1"/>
</dbReference>
<dbReference type="PRINTS" id="PR00326">
    <property type="entry name" value="GTP1OBG"/>
</dbReference>
<dbReference type="SUPFAM" id="SSF82051">
    <property type="entry name" value="Obg GTP-binding protein N-terminal domain"/>
    <property type="match status" value="1"/>
</dbReference>
<dbReference type="SUPFAM" id="SSF52540">
    <property type="entry name" value="P-loop containing nucleoside triphosphate hydrolases"/>
    <property type="match status" value="1"/>
</dbReference>
<dbReference type="PROSITE" id="PS51710">
    <property type="entry name" value="G_OBG"/>
    <property type="match status" value="1"/>
</dbReference>
<dbReference type="PROSITE" id="PS00905">
    <property type="entry name" value="GTP1_OBG"/>
    <property type="match status" value="1"/>
</dbReference>
<dbReference type="PROSITE" id="PS51883">
    <property type="entry name" value="OBG"/>
    <property type="match status" value="1"/>
</dbReference>